<reference key="1">
    <citation type="journal article" date="2004" name="J. Biol. Chem.">
        <title>Identification and molecular characterization of the beta-ketoacyl-[acyl carrier-protein] synthase component of the Arabidopsis mitochondrial fatty acid synthase.</title>
        <authorList>
            <person name="Yasuno R."/>
            <person name="von Wettstein-Knowles P."/>
            <person name="Wada H."/>
        </authorList>
    </citation>
    <scope>NUCLEOTIDE SEQUENCE [MRNA]</scope>
    <scope>CHARACTERIZATION</scope>
    <scope>SUBCELLULAR LOCATION</scope>
    <scope>TISSUE SPECIFICITY</scope>
    <source>
        <strain>cv. Columbia</strain>
    </source>
</reference>
<reference key="2">
    <citation type="journal article" date="1999" name="Nature">
        <title>Sequence and analysis of chromosome 2 of the plant Arabidopsis thaliana.</title>
        <authorList>
            <person name="Lin X."/>
            <person name="Kaul S."/>
            <person name="Rounsley S.D."/>
            <person name="Shea T.P."/>
            <person name="Benito M.-I."/>
            <person name="Town C.D."/>
            <person name="Fujii C.Y."/>
            <person name="Mason T.M."/>
            <person name="Bowman C.L."/>
            <person name="Barnstead M.E."/>
            <person name="Feldblyum T.V."/>
            <person name="Buell C.R."/>
            <person name="Ketchum K.A."/>
            <person name="Lee J.J."/>
            <person name="Ronning C.M."/>
            <person name="Koo H.L."/>
            <person name="Moffat K.S."/>
            <person name="Cronin L.A."/>
            <person name="Shen M."/>
            <person name="Pai G."/>
            <person name="Van Aken S."/>
            <person name="Umayam L."/>
            <person name="Tallon L.J."/>
            <person name="Gill J.E."/>
            <person name="Adams M.D."/>
            <person name="Carrera A.J."/>
            <person name="Creasy T.H."/>
            <person name="Goodman H.M."/>
            <person name="Somerville C.R."/>
            <person name="Copenhaver G.P."/>
            <person name="Preuss D."/>
            <person name="Nierman W.C."/>
            <person name="White O."/>
            <person name="Eisen J.A."/>
            <person name="Salzberg S.L."/>
            <person name="Fraser C.M."/>
            <person name="Venter J.C."/>
        </authorList>
    </citation>
    <scope>NUCLEOTIDE SEQUENCE [LARGE SCALE GENOMIC DNA]</scope>
    <source>
        <strain>cv. Columbia</strain>
    </source>
</reference>
<reference key="3">
    <citation type="journal article" date="2017" name="Plant J.">
        <title>Araport11: a complete reannotation of the Arabidopsis thaliana reference genome.</title>
        <authorList>
            <person name="Cheng C.Y."/>
            <person name="Krishnakumar V."/>
            <person name="Chan A.P."/>
            <person name="Thibaud-Nissen F."/>
            <person name="Schobel S."/>
            <person name="Town C.D."/>
        </authorList>
    </citation>
    <scope>GENOME REANNOTATION</scope>
    <source>
        <strain>cv. Columbia</strain>
    </source>
</reference>
<reference key="4">
    <citation type="journal article" date="2003" name="Science">
        <title>Empirical analysis of transcriptional activity in the Arabidopsis genome.</title>
        <authorList>
            <person name="Yamada K."/>
            <person name="Lim J."/>
            <person name="Dale J.M."/>
            <person name="Chen H."/>
            <person name="Shinn P."/>
            <person name="Palm C.J."/>
            <person name="Southwick A.M."/>
            <person name="Wu H.C."/>
            <person name="Kim C.J."/>
            <person name="Nguyen M."/>
            <person name="Pham P.K."/>
            <person name="Cheuk R.F."/>
            <person name="Karlin-Newmann G."/>
            <person name="Liu S.X."/>
            <person name="Lam B."/>
            <person name="Sakano H."/>
            <person name="Wu T."/>
            <person name="Yu G."/>
            <person name="Miranda M."/>
            <person name="Quach H.L."/>
            <person name="Tripp M."/>
            <person name="Chang C.H."/>
            <person name="Lee J.M."/>
            <person name="Toriumi M.J."/>
            <person name="Chan M.M."/>
            <person name="Tang C.C."/>
            <person name="Onodera C.S."/>
            <person name="Deng J.M."/>
            <person name="Akiyama K."/>
            <person name="Ansari Y."/>
            <person name="Arakawa T."/>
            <person name="Banh J."/>
            <person name="Banno F."/>
            <person name="Bowser L."/>
            <person name="Brooks S.Y."/>
            <person name="Carninci P."/>
            <person name="Chao Q."/>
            <person name="Choy N."/>
            <person name="Enju A."/>
            <person name="Goldsmith A.D."/>
            <person name="Gurjal M."/>
            <person name="Hansen N.F."/>
            <person name="Hayashizaki Y."/>
            <person name="Johnson-Hopson C."/>
            <person name="Hsuan V.W."/>
            <person name="Iida K."/>
            <person name="Karnes M."/>
            <person name="Khan S."/>
            <person name="Koesema E."/>
            <person name="Ishida J."/>
            <person name="Jiang P.X."/>
            <person name="Jones T."/>
            <person name="Kawai J."/>
            <person name="Kamiya A."/>
            <person name="Meyers C."/>
            <person name="Nakajima M."/>
            <person name="Narusaka M."/>
            <person name="Seki M."/>
            <person name="Sakurai T."/>
            <person name="Satou M."/>
            <person name="Tamse R."/>
            <person name="Vaysberg M."/>
            <person name="Wallender E.K."/>
            <person name="Wong C."/>
            <person name="Yamamura Y."/>
            <person name="Yuan S."/>
            <person name="Shinozaki K."/>
            <person name="Davis R.W."/>
            <person name="Theologis A."/>
            <person name="Ecker J.R."/>
        </authorList>
    </citation>
    <scope>NUCLEOTIDE SEQUENCE [LARGE SCALE MRNA]</scope>
    <source>
        <strain>cv. Columbia</strain>
    </source>
</reference>
<reference key="5">
    <citation type="journal article" date="2007" name="Plant Physiol.">
        <title>Mitochondrial protein lipoylation does not exclusively depend on the mtKAS pathway of de novo fatty acid synthesis in Arabidopsis.</title>
        <authorList>
            <person name="Ewald R."/>
            <person name="Kolukisaoglu U."/>
            <person name="Bauwe U."/>
            <person name="Mikkat S."/>
            <person name="Bauwe H."/>
        </authorList>
    </citation>
    <scope>FUNCTION</scope>
    <scope>DISRUPTION PHENOTYPE</scope>
</reference>
<reference key="6">
    <citation type="journal article" date="2017" name="Plant Physiol.">
        <title>Discovery and characterization of the 3-hydroxyacyl-ACP dehydratase component of the plant mitochondrial fatty acid synthase system.</title>
        <authorList>
            <person name="Guan X."/>
            <person name="Okazaki Y."/>
            <person name="Lithio A."/>
            <person name="Li L."/>
            <person name="Zhao X."/>
            <person name="Jin H."/>
            <person name="Nettleton D."/>
            <person name="Saito K."/>
            <person name="Nikolau B.J."/>
        </authorList>
    </citation>
    <scope>FUNCTION</scope>
    <scope>DISRUPTION PHENOTYPE</scope>
    <scope>CATALYTIC ACTIVITY</scope>
    <scope>PATHWAY</scope>
    <scope>BIOPHYSICOCHEMICAL PROPERTIES</scope>
    <scope>TISSUE SPECIFICITY</scope>
    <source>
        <strain>cv. Columbia</strain>
    </source>
</reference>
<reference key="7">
    <citation type="journal article" date="2004" name="FEBS Lett.">
        <title>Structure of the mitochondrial beta-ketoacyl-[acyl carrier-protein] synthase from Arabidopsis and its role in fatty acid synthesis.</title>
        <authorList>
            <person name="Olsen J.G."/>
            <person name="Rasmussen A.V."/>
            <person name="von Wettstein-Knowles P."/>
            <person name="Henriksen A."/>
        </authorList>
    </citation>
    <scope>X-RAY CRYSTALLOGRAPHY (2.1 ANGSTROMS) OF 31-461</scope>
    <scope>SUBUNIT</scope>
</reference>
<keyword id="KW-0002">3D-structure</keyword>
<keyword id="KW-0012">Acyltransferase</keyword>
<keyword id="KW-0275">Fatty acid biosynthesis</keyword>
<keyword id="KW-0276">Fatty acid metabolism</keyword>
<keyword id="KW-0444">Lipid biosynthesis</keyword>
<keyword id="KW-0443">Lipid metabolism</keyword>
<keyword id="KW-0496">Mitochondrion</keyword>
<keyword id="KW-1185">Reference proteome</keyword>
<keyword id="KW-0808">Transferase</keyword>
<keyword id="KW-0809">Transit peptide</keyword>
<proteinExistence type="evidence at protein level"/>
<gene>
    <name evidence="8" type="primary">KAS</name>
    <name evidence="13" type="ordered locus">At2g04540</name>
    <name evidence="14" type="ORF">T1O3.5</name>
</gene>
<comment type="function">
    <text evidence="5 6">Catalyzes all the condensation reaction of fatty acid synthesis by the addition to an acyl acceptor of two carbons from malonyl-ACP (PubMed:17616510, PubMed:28202596). Able to elongate saturated acyl chains from 4 to at least 16 carbons (PubMed:17616510, PubMed:28202596). Uses malonyl-CoA but not acetyl-CoA as primer substrate (PubMed:17616510). When expressed in a heterologous system, reveals a bimodal distribution of products, with peaks at C8 and C14-C16 (PubMed:17616510). The major product of the reaction (octanoyl-ACP) is required for the lipoylation of essential mitochondrial proteins (PubMed:17616510, PubMed:28202596). Required for mitochondrial fatty acid synthesis (mtFAS) (PubMed:28202596). MtFAS are essential for photorespiration and plant development, probably by influencing mitochondrial membrane lipid composition and other lipid metabolic pathways (PubMed:28202596).</text>
</comment>
<comment type="catalytic activity">
    <reaction evidence="6">
        <text>a fatty acyl-[ACP] + malonyl-[ACP] + H(+) = a 3-oxoacyl-[ACP] + holo-[ACP] + CO2</text>
        <dbReference type="Rhea" id="RHEA:22836"/>
        <dbReference type="Rhea" id="RHEA-COMP:9623"/>
        <dbReference type="Rhea" id="RHEA-COMP:9685"/>
        <dbReference type="Rhea" id="RHEA-COMP:9916"/>
        <dbReference type="Rhea" id="RHEA-COMP:14125"/>
        <dbReference type="ChEBI" id="CHEBI:15378"/>
        <dbReference type="ChEBI" id="CHEBI:16526"/>
        <dbReference type="ChEBI" id="CHEBI:64479"/>
        <dbReference type="ChEBI" id="CHEBI:78449"/>
        <dbReference type="ChEBI" id="CHEBI:78776"/>
        <dbReference type="ChEBI" id="CHEBI:138651"/>
        <dbReference type="EC" id="2.3.1.41"/>
    </reaction>
    <physiologicalReaction direction="left-to-right" evidence="12">
        <dbReference type="Rhea" id="RHEA:22837"/>
    </physiologicalReaction>
</comment>
<comment type="catalytic activity">
    <reaction evidence="6">
        <text>butanoyl-[ACP] + malonyl-[ACP] + H(+) = 3-oxohexanoyl-[ACP] + holo-[ACP] + CO2</text>
        <dbReference type="Rhea" id="RHEA:41820"/>
        <dbReference type="Rhea" id="RHEA-COMP:9623"/>
        <dbReference type="Rhea" id="RHEA-COMP:9628"/>
        <dbReference type="Rhea" id="RHEA-COMP:9629"/>
        <dbReference type="Rhea" id="RHEA-COMP:9685"/>
        <dbReference type="ChEBI" id="CHEBI:15378"/>
        <dbReference type="ChEBI" id="CHEBI:16526"/>
        <dbReference type="ChEBI" id="CHEBI:64479"/>
        <dbReference type="ChEBI" id="CHEBI:78449"/>
        <dbReference type="ChEBI" id="CHEBI:78454"/>
        <dbReference type="ChEBI" id="CHEBI:78456"/>
    </reaction>
    <physiologicalReaction direction="left-to-right" evidence="12">
        <dbReference type="Rhea" id="RHEA:41821"/>
    </physiologicalReaction>
</comment>
<comment type="catalytic activity">
    <reaction evidence="6">
        <text>hexanoyl-[ACP] + malonyl-[ACP] + H(+) = 3-oxooctanoyl-[ACP] + holo-[ACP] + CO2</text>
        <dbReference type="Rhea" id="RHEA:41836"/>
        <dbReference type="Rhea" id="RHEA-COMP:9623"/>
        <dbReference type="Rhea" id="RHEA-COMP:9632"/>
        <dbReference type="Rhea" id="RHEA-COMP:9633"/>
        <dbReference type="Rhea" id="RHEA-COMP:9685"/>
        <dbReference type="ChEBI" id="CHEBI:15378"/>
        <dbReference type="ChEBI" id="CHEBI:16526"/>
        <dbReference type="ChEBI" id="CHEBI:64479"/>
        <dbReference type="ChEBI" id="CHEBI:78449"/>
        <dbReference type="ChEBI" id="CHEBI:78459"/>
        <dbReference type="ChEBI" id="CHEBI:78460"/>
    </reaction>
    <physiologicalReaction direction="left-to-right" evidence="12">
        <dbReference type="Rhea" id="RHEA:41837"/>
    </physiologicalReaction>
</comment>
<comment type="catalytic activity">
    <reaction evidence="6">
        <text>octanoyl-[ACP] + malonyl-[ACP] + H(+) = 3-oxodecanoyl-[ACP] + holo-[ACP] + CO2</text>
        <dbReference type="Rhea" id="RHEA:41852"/>
        <dbReference type="Rhea" id="RHEA-COMP:9623"/>
        <dbReference type="Rhea" id="RHEA-COMP:9636"/>
        <dbReference type="Rhea" id="RHEA-COMP:9637"/>
        <dbReference type="Rhea" id="RHEA-COMP:9685"/>
        <dbReference type="ChEBI" id="CHEBI:15378"/>
        <dbReference type="ChEBI" id="CHEBI:16526"/>
        <dbReference type="ChEBI" id="CHEBI:64479"/>
        <dbReference type="ChEBI" id="CHEBI:78449"/>
        <dbReference type="ChEBI" id="CHEBI:78463"/>
        <dbReference type="ChEBI" id="CHEBI:78464"/>
    </reaction>
    <physiologicalReaction direction="left-to-right" evidence="12">
        <dbReference type="Rhea" id="RHEA:41853"/>
    </physiologicalReaction>
</comment>
<comment type="catalytic activity">
    <reaction evidence="6">
        <text>decanoyl-[ACP] + malonyl-[ACP] + H(+) = 3-oxododecanoyl-[ACP] + holo-[ACP] + CO2</text>
        <dbReference type="Rhea" id="RHEA:41868"/>
        <dbReference type="Rhea" id="RHEA-COMP:9623"/>
        <dbReference type="Rhea" id="RHEA-COMP:9640"/>
        <dbReference type="Rhea" id="RHEA-COMP:9641"/>
        <dbReference type="Rhea" id="RHEA-COMP:9685"/>
        <dbReference type="ChEBI" id="CHEBI:15378"/>
        <dbReference type="ChEBI" id="CHEBI:16526"/>
        <dbReference type="ChEBI" id="CHEBI:64479"/>
        <dbReference type="ChEBI" id="CHEBI:78449"/>
        <dbReference type="ChEBI" id="CHEBI:78468"/>
        <dbReference type="ChEBI" id="CHEBI:78469"/>
    </reaction>
    <physiologicalReaction direction="left-to-right" evidence="12">
        <dbReference type="Rhea" id="RHEA:41869"/>
    </physiologicalReaction>
</comment>
<comment type="catalytic activity">
    <reaction evidence="6">
        <text>dodecanoyl-[ACP] + malonyl-[ACP] + H(+) = 3-oxotetradecanoyl-[ACP] + holo-[ACP] + CO2</text>
        <dbReference type="Rhea" id="RHEA:41884"/>
        <dbReference type="Rhea" id="RHEA-COMP:9623"/>
        <dbReference type="Rhea" id="RHEA-COMP:9644"/>
        <dbReference type="Rhea" id="RHEA-COMP:9645"/>
        <dbReference type="Rhea" id="RHEA-COMP:9685"/>
        <dbReference type="ChEBI" id="CHEBI:15378"/>
        <dbReference type="ChEBI" id="CHEBI:16526"/>
        <dbReference type="ChEBI" id="CHEBI:64479"/>
        <dbReference type="ChEBI" id="CHEBI:65264"/>
        <dbReference type="ChEBI" id="CHEBI:78449"/>
        <dbReference type="ChEBI" id="CHEBI:78473"/>
    </reaction>
    <physiologicalReaction direction="left-to-right" evidence="12">
        <dbReference type="Rhea" id="RHEA:41885"/>
    </physiologicalReaction>
</comment>
<comment type="catalytic activity">
    <reaction evidence="6">
        <text>tetradecanoyl-[ACP] + malonyl-[ACP] + H(+) = 3-oxohexadecanoyl-[ACP] + holo-[ACP] + CO2</text>
        <dbReference type="Rhea" id="RHEA:41900"/>
        <dbReference type="Rhea" id="RHEA-COMP:9623"/>
        <dbReference type="Rhea" id="RHEA-COMP:9648"/>
        <dbReference type="Rhea" id="RHEA-COMP:9649"/>
        <dbReference type="Rhea" id="RHEA-COMP:9685"/>
        <dbReference type="ChEBI" id="CHEBI:15378"/>
        <dbReference type="ChEBI" id="CHEBI:16526"/>
        <dbReference type="ChEBI" id="CHEBI:64479"/>
        <dbReference type="ChEBI" id="CHEBI:78449"/>
        <dbReference type="ChEBI" id="CHEBI:78477"/>
        <dbReference type="ChEBI" id="CHEBI:78478"/>
    </reaction>
    <physiologicalReaction direction="left-to-right" evidence="12">
        <dbReference type="Rhea" id="RHEA:41901"/>
    </physiologicalReaction>
</comment>
<comment type="catalytic activity">
    <reaction evidence="6">
        <text>hexadecanoyl-[ACP] + malonyl-[ACP] + H(+) = 3-oxooctadecanoyl-[ACP] + holo-[ACP] + CO2</text>
        <dbReference type="Rhea" id="RHEA:41916"/>
        <dbReference type="Rhea" id="RHEA-COMP:9623"/>
        <dbReference type="Rhea" id="RHEA-COMP:9652"/>
        <dbReference type="Rhea" id="RHEA-COMP:9653"/>
        <dbReference type="Rhea" id="RHEA-COMP:9685"/>
        <dbReference type="ChEBI" id="CHEBI:15378"/>
        <dbReference type="ChEBI" id="CHEBI:16526"/>
        <dbReference type="ChEBI" id="CHEBI:64479"/>
        <dbReference type="ChEBI" id="CHEBI:78449"/>
        <dbReference type="ChEBI" id="CHEBI:78483"/>
        <dbReference type="ChEBI" id="CHEBI:78487"/>
    </reaction>
    <physiologicalReaction direction="left-to-right" evidence="12">
        <dbReference type="Rhea" id="RHEA:41917"/>
    </physiologicalReaction>
</comment>
<comment type="activity regulation">
    <text>Inhibited by cerulenin.</text>
</comment>
<comment type="biophysicochemical properties">
    <kinetics>
        <KM evidence="6">19.1 uM for butanoyl-[ACP]</KM>
        <KM evidence="6">8 uM for hexanoyl-[ACP]</KM>
        <KM evidence="6">22.9 uM for octanoyl-[ACP]</KM>
        <KM evidence="6">14.1 uM for decanoyl-[ACP]</KM>
        <KM evidence="6">25.6 uM for dodecanoyl-[ACP]</KM>
        <KM evidence="6">14 uM for tetradecanoyl-[ACP]</KM>
        <KM evidence="6">8.2 uM for hexadecanoyl-[ACP]</KM>
        <Vmax evidence="6">144.7 umol/min/mg enzyme with butanoyl-[ACP] as substrate</Vmax>
        <Vmax evidence="6">193.1 umol/min/mg enzyme with hexanoyl-[ACP] as substrate</Vmax>
        <Vmax evidence="6">444.1 umol/min/mg enzyme with octanoyl-[ACP] as substrate</Vmax>
        <Vmax evidence="6">237.4 umol/min/mg enzyme with decanoyl-[ACP] as substrate</Vmax>
        <Vmax evidence="6">317.6 umol/min/mg enzyme with dodecanoyl-[ACP] as substrate</Vmax>
        <Vmax evidence="6">340.8 umol/min/mg enzyme with tetradecanoyl-[ACP] as substrate</Vmax>
        <Vmax evidence="6">359.9 umol/min/mg enzyme with hexadecanoyl-[ACP] as substrate</Vmax>
    </kinetics>
</comment>
<comment type="pathway">
    <text evidence="6">Lipid metabolism; fatty acid biosynthesis.</text>
</comment>
<comment type="subunit">
    <text evidence="4">Homodimer.</text>
</comment>
<comment type="subcellular location">
    <subcellularLocation>
        <location evidence="3">Mitochondrion</location>
    </subcellularLocation>
</comment>
<comment type="tissue specificity">
    <text evidence="3 6">Expressed at the same level in leaves, roots, siliques and flowers.</text>
</comment>
<comment type="disruption phenotype">
    <text evidence="5 6">Slow growth and bleached leaf phenotype when grown under ambient air, but normal growth under CO(2)-enriched air (PubMed:17616510, PubMed:28202596). Thicker leaves due to enlarged mesophyll cells when grown in ambient air and associated with altered thylakoid membrane assembly and starch granule ultrastructure; these phenotypes are partly reversed when grown in 1 percent CO(2) atmosphere (PubMed:28202596). Highly prevents lipoylation of the H-protein subunit of the glycine decarboxylase (GDC) in leaves, but has only a limited effect on the lipoylation of the E2 subunits of pyruvate dehydrogenase (PDH) and alpha-ketoacid dehydrogenase (KGDH) complexes in leaves and even no effect in roots (PubMed:17616510, PubMed:28202596). Depleted 3-hydroxytetradecanoic acid levels (PubMed:28202596).</text>
</comment>
<comment type="miscellaneous">
    <text evidence="11">Mitochondrial protein lipoylation in leaves does not exclusively depend on the lipoate biosynthesis by KAS and may occur independently of this pathway in roots.</text>
</comment>
<comment type="similarity">
    <text evidence="10">Belongs to the thiolase-like superfamily. Beta-ketoacyl-ACP synthases family.</text>
</comment>
<comment type="sequence caution" evidence="10">
    <conflict type="erroneous gene model prediction">
        <sequence resource="EMBL-CDS" id="AAD25826"/>
    </conflict>
</comment>
<name>KASM_ARATH</name>
<organism>
    <name type="scientific">Arabidopsis thaliana</name>
    <name type="common">Mouse-ear cress</name>
    <dbReference type="NCBI Taxonomy" id="3702"/>
    <lineage>
        <taxon>Eukaryota</taxon>
        <taxon>Viridiplantae</taxon>
        <taxon>Streptophyta</taxon>
        <taxon>Embryophyta</taxon>
        <taxon>Tracheophyta</taxon>
        <taxon>Spermatophyta</taxon>
        <taxon>Magnoliopsida</taxon>
        <taxon>eudicotyledons</taxon>
        <taxon>Gunneridae</taxon>
        <taxon>Pentapetalae</taxon>
        <taxon>rosids</taxon>
        <taxon>malvids</taxon>
        <taxon>Brassicales</taxon>
        <taxon>Brassicaceae</taxon>
        <taxon>Camelineae</taxon>
        <taxon>Arabidopsis</taxon>
    </lineage>
</organism>
<protein>
    <recommendedName>
        <fullName evidence="9">3-oxoacyl-[acyl-carrier-protein] synthase, mitochondrial</fullName>
        <ecNumber evidence="6">2.3.1.41</ecNumber>
    </recommendedName>
    <alternativeName>
        <fullName evidence="7">Beta-ketoacyl-ACP synthase</fullName>
    </alternativeName>
    <alternativeName>
        <fullName evidence="8">mtKAS</fullName>
    </alternativeName>
</protein>
<feature type="transit peptide" description="Mitochondrion" evidence="1">
    <location>
        <begin position="1"/>
        <end position="28"/>
    </location>
</feature>
<feature type="chain" id="PRO_0000000588" description="3-oxoacyl-[acyl-carrier-protein] synthase, mitochondrial">
    <location>
        <begin position="29"/>
        <end position="461"/>
    </location>
</feature>
<feature type="domain" description="Ketosynthase family 3 (KS3)" evidence="2">
    <location>
        <begin position="30"/>
        <end position="460"/>
    </location>
</feature>
<feature type="active site" description="For beta-ketoacyl synthase activity" evidence="2">
    <location>
        <position position="209"/>
    </location>
</feature>
<feature type="active site" description="For beta-ketoacyl synthase activity" evidence="2">
    <location>
        <position position="350"/>
    </location>
</feature>
<feature type="active site" description="For beta-ketoacyl synthase activity" evidence="2">
    <location>
        <position position="389"/>
    </location>
</feature>
<feature type="strand" evidence="15">
    <location>
        <begin position="33"/>
        <end position="42"/>
    </location>
</feature>
<feature type="strand" evidence="15">
    <location>
        <begin position="45"/>
        <end position="47"/>
    </location>
</feature>
<feature type="helix" evidence="15">
    <location>
        <begin position="48"/>
        <end position="56"/>
    </location>
</feature>
<feature type="strand" evidence="15">
    <location>
        <begin position="62"/>
        <end position="64"/>
    </location>
</feature>
<feature type="helix" evidence="15">
    <location>
        <begin position="67"/>
        <end position="70"/>
    </location>
</feature>
<feature type="helix" evidence="15">
    <location>
        <begin position="77"/>
        <end position="85"/>
    </location>
</feature>
<feature type="strand" evidence="15">
    <location>
        <begin position="91"/>
        <end position="93"/>
    </location>
</feature>
<feature type="strand" evidence="15">
    <location>
        <begin position="97"/>
        <end position="100"/>
    </location>
</feature>
<feature type="helix" evidence="15">
    <location>
        <begin position="106"/>
        <end position="109"/>
    </location>
</feature>
<feature type="helix" evidence="15">
    <location>
        <begin position="117"/>
        <end position="132"/>
    </location>
</feature>
<feature type="helix" evidence="15">
    <location>
        <begin position="140"/>
        <end position="144"/>
    </location>
</feature>
<feature type="strand" evidence="15">
    <location>
        <begin position="146"/>
        <end position="154"/>
    </location>
</feature>
<feature type="helix" evidence="15">
    <location>
        <begin position="157"/>
        <end position="168"/>
    </location>
</feature>
<feature type="helix" evidence="15">
    <location>
        <begin position="172"/>
        <end position="174"/>
    </location>
</feature>
<feature type="helix" evidence="15">
    <location>
        <begin position="179"/>
        <end position="183"/>
    </location>
</feature>
<feature type="helix" evidence="15">
    <location>
        <begin position="187"/>
        <end position="196"/>
    </location>
</feature>
<feature type="helix" evidence="15">
    <location>
        <begin position="208"/>
        <end position="210"/>
    </location>
</feature>
<feature type="helix" evidence="15">
    <location>
        <begin position="211"/>
        <end position="225"/>
    </location>
</feature>
<feature type="strand" evidence="15">
    <location>
        <begin position="229"/>
        <end position="237"/>
    </location>
</feature>
<feature type="helix" evidence="15">
    <location>
        <begin position="242"/>
        <end position="250"/>
    </location>
</feature>
<feature type="turn" evidence="15">
    <location>
        <begin position="257"/>
        <end position="260"/>
    </location>
</feature>
<feature type="helix" evidence="15">
    <location>
        <begin position="262"/>
        <end position="264"/>
    </location>
</feature>
<feature type="strand" evidence="15">
    <location>
        <begin position="281"/>
        <end position="289"/>
    </location>
</feature>
<feature type="helix" evidence="15">
    <location>
        <begin position="290"/>
        <end position="295"/>
    </location>
</feature>
<feature type="strand" evidence="15">
    <location>
        <begin position="302"/>
        <end position="311"/>
    </location>
</feature>
<feature type="helix" evidence="15">
    <location>
        <begin position="324"/>
        <end position="337"/>
    </location>
</feature>
<feature type="helix" evidence="15">
    <location>
        <begin position="341"/>
        <end position="343"/>
    </location>
</feature>
<feature type="strand" evidence="15">
    <location>
        <begin position="346"/>
        <end position="348"/>
    </location>
</feature>
<feature type="helix" evidence="15">
    <location>
        <begin position="355"/>
        <end position="369"/>
    </location>
</feature>
<feature type="helix" evidence="15">
    <location>
        <begin position="371"/>
        <end position="374"/>
    </location>
</feature>
<feature type="strand" evidence="15">
    <location>
        <begin position="378"/>
        <end position="381"/>
    </location>
</feature>
<feature type="helix" evidence="15">
    <location>
        <begin position="384"/>
        <end position="387"/>
    </location>
</feature>
<feature type="helix" evidence="15">
    <location>
        <begin position="391"/>
        <end position="393"/>
    </location>
</feature>
<feature type="helix" evidence="15">
    <location>
        <begin position="394"/>
        <end position="408"/>
    </location>
</feature>
<feature type="strand" evidence="15">
    <location>
        <begin position="418"/>
        <end position="420"/>
    </location>
</feature>
<feature type="strand" evidence="15">
    <location>
        <begin position="426"/>
        <end position="428"/>
    </location>
</feature>
<feature type="strand" evidence="15">
    <location>
        <begin position="440"/>
        <end position="448"/>
    </location>
</feature>
<feature type="turn" evidence="15">
    <location>
        <begin position="449"/>
        <end position="451"/>
    </location>
</feature>
<feature type="strand" evidence="15">
    <location>
        <begin position="452"/>
        <end position="459"/>
    </location>
</feature>
<dbReference type="EC" id="2.3.1.41" evidence="6"/>
<dbReference type="EMBL" id="AB073746">
    <property type="protein sequence ID" value="BAB91181.1"/>
    <property type="molecule type" value="mRNA"/>
</dbReference>
<dbReference type="EMBL" id="AC006951">
    <property type="protein sequence ID" value="AAD25826.1"/>
    <property type="status" value="ALT_SEQ"/>
    <property type="molecule type" value="Genomic_DNA"/>
</dbReference>
<dbReference type="EMBL" id="CP002685">
    <property type="protein sequence ID" value="AEC05844.1"/>
    <property type="molecule type" value="Genomic_DNA"/>
</dbReference>
<dbReference type="EMBL" id="AY099587">
    <property type="protein sequence ID" value="AAM20439.1"/>
    <property type="molecule type" value="mRNA"/>
</dbReference>
<dbReference type="EMBL" id="AY128832">
    <property type="protein sequence ID" value="AAM91232.1"/>
    <property type="molecule type" value="mRNA"/>
</dbReference>
<dbReference type="PIR" id="F84458">
    <property type="entry name" value="F84458"/>
</dbReference>
<dbReference type="RefSeq" id="NP_178533.2">
    <property type="nucleotide sequence ID" value="NM_126485.4"/>
</dbReference>
<dbReference type="PDB" id="1W0I">
    <property type="method" value="X-ray"/>
    <property type="resolution" value="2.10 A"/>
    <property type="chains" value="A/B=31-461"/>
</dbReference>
<dbReference type="PDB" id="2IX4">
    <property type="method" value="X-ray"/>
    <property type="resolution" value="1.95 A"/>
    <property type="chains" value="A/B=31-461"/>
</dbReference>
<dbReference type="PDBsum" id="1W0I"/>
<dbReference type="PDBsum" id="2IX4"/>
<dbReference type="SMR" id="Q8L3X9"/>
<dbReference type="FunCoup" id="Q8L3X9">
    <property type="interactions" value="2598"/>
</dbReference>
<dbReference type="STRING" id="3702.Q8L3X9"/>
<dbReference type="iPTMnet" id="Q8L3X9"/>
<dbReference type="PaxDb" id="3702-AT2G04540.1"/>
<dbReference type="ProteomicsDB" id="232273"/>
<dbReference type="EnsemblPlants" id="AT2G04540.1">
    <property type="protein sequence ID" value="AT2G04540.1"/>
    <property type="gene ID" value="AT2G04540"/>
</dbReference>
<dbReference type="GeneID" id="814996"/>
<dbReference type="Gramene" id="AT2G04540.1">
    <property type="protein sequence ID" value="AT2G04540.1"/>
    <property type="gene ID" value="AT2G04540"/>
</dbReference>
<dbReference type="KEGG" id="ath:AT2G04540"/>
<dbReference type="Araport" id="AT2G04540"/>
<dbReference type="TAIR" id="AT2G04540">
    <property type="gene designation" value="MTKAS"/>
</dbReference>
<dbReference type="eggNOG" id="KOG1394">
    <property type="taxonomic scope" value="Eukaryota"/>
</dbReference>
<dbReference type="HOGENOM" id="CLU_000022_69_2_1"/>
<dbReference type="InParanoid" id="Q8L3X9"/>
<dbReference type="OMA" id="QIGHCLG"/>
<dbReference type="PhylomeDB" id="Q8L3X9"/>
<dbReference type="BioCyc" id="ARA:AT2G04540-MONOMER"/>
<dbReference type="BioCyc" id="MetaCyc:AT2G04540-MONOMER"/>
<dbReference type="BRENDA" id="2.3.1.41">
    <property type="organism ID" value="399"/>
</dbReference>
<dbReference type="UniPathway" id="UPA00094"/>
<dbReference type="EvolutionaryTrace" id="Q8L3X9"/>
<dbReference type="PRO" id="PR:Q8L3X9"/>
<dbReference type="Proteomes" id="UP000006548">
    <property type="component" value="Chromosome 2"/>
</dbReference>
<dbReference type="ExpressionAtlas" id="Q8L3X9">
    <property type="expression patterns" value="baseline and differential"/>
</dbReference>
<dbReference type="GO" id="GO:0005739">
    <property type="term" value="C:mitochondrion"/>
    <property type="evidence" value="ECO:0007669"/>
    <property type="project" value="UniProtKB-SubCell"/>
</dbReference>
<dbReference type="GO" id="GO:0004315">
    <property type="term" value="F:3-oxoacyl-[acyl-carrier-protein] synthase activity"/>
    <property type="evidence" value="ECO:0007669"/>
    <property type="project" value="UniProtKB-EC"/>
</dbReference>
<dbReference type="GO" id="GO:0006633">
    <property type="term" value="P:fatty acid biosynthetic process"/>
    <property type="evidence" value="ECO:0007669"/>
    <property type="project" value="UniProtKB-UniPathway"/>
</dbReference>
<dbReference type="GO" id="GO:0010027">
    <property type="term" value="P:thylakoid membrane organization"/>
    <property type="evidence" value="ECO:0000315"/>
    <property type="project" value="TAIR"/>
</dbReference>
<dbReference type="CDD" id="cd00834">
    <property type="entry name" value="KAS_I_II"/>
    <property type="match status" value="1"/>
</dbReference>
<dbReference type="FunFam" id="3.40.47.10:FF:000015">
    <property type="entry name" value="3-oxoacyl-[acyl-carrier-protein] synthase, mitochondrial"/>
    <property type="match status" value="1"/>
</dbReference>
<dbReference type="FunFam" id="3.40.47.10:FF:000024">
    <property type="entry name" value="3-oxoacyl-[acyl-carrier-protein] synthase, mitochondrial"/>
    <property type="match status" value="1"/>
</dbReference>
<dbReference type="Gene3D" id="3.40.47.10">
    <property type="match status" value="2"/>
</dbReference>
<dbReference type="InterPro" id="IPR017568">
    <property type="entry name" value="3-oxoacyl-ACP_synth-2"/>
</dbReference>
<dbReference type="InterPro" id="IPR000794">
    <property type="entry name" value="Beta-ketoacyl_synthase"/>
</dbReference>
<dbReference type="InterPro" id="IPR018201">
    <property type="entry name" value="Ketoacyl_synth_AS"/>
</dbReference>
<dbReference type="InterPro" id="IPR014031">
    <property type="entry name" value="Ketoacyl_synth_C"/>
</dbReference>
<dbReference type="InterPro" id="IPR014030">
    <property type="entry name" value="Ketoacyl_synth_N"/>
</dbReference>
<dbReference type="InterPro" id="IPR020841">
    <property type="entry name" value="PKS_Beta-ketoAc_synthase_dom"/>
</dbReference>
<dbReference type="InterPro" id="IPR016039">
    <property type="entry name" value="Thiolase-like"/>
</dbReference>
<dbReference type="NCBIfam" id="TIGR03150">
    <property type="entry name" value="fabF"/>
    <property type="match status" value="1"/>
</dbReference>
<dbReference type="NCBIfam" id="NF005589">
    <property type="entry name" value="PRK07314.1"/>
    <property type="match status" value="1"/>
</dbReference>
<dbReference type="PANTHER" id="PTHR11712:SF297">
    <property type="entry name" value="3-OXOACYL-[ACYL-CARRIER-PROTEIN] SYNTHASE, MITOCHONDRIAL"/>
    <property type="match status" value="1"/>
</dbReference>
<dbReference type="PANTHER" id="PTHR11712">
    <property type="entry name" value="POLYKETIDE SYNTHASE-RELATED"/>
    <property type="match status" value="1"/>
</dbReference>
<dbReference type="Pfam" id="PF00109">
    <property type="entry name" value="ketoacyl-synt"/>
    <property type="match status" value="1"/>
</dbReference>
<dbReference type="Pfam" id="PF02801">
    <property type="entry name" value="Ketoacyl-synt_C"/>
    <property type="match status" value="1"/>
</dbReference>
<dbReference type="PIRSF" id="PIRSF000447">
    <property type="entry name" value="KAS_II"/>
    <property type="match status" value="1"/>
</dbReference>
<dbReference type="SMART" id="SM00825">
    <property type="entry name" value="PKS_KS"/>
    <property type="match status" value="1"/>
</dbReference>
<dbReference type="SUPFAM" id="SSF53901">
    <property type="entry name" value="Thiolase-like"/>
    <property type="match status" value="2"/>
</dbReference>
<dbReference type="PROSITE" id="PS00606">
    <property type="entry name" value="KS3_1"/>
    <property type="match status" value="1"/>
</dbReference>
<dbReference type="PROSITE" id="PS52004">
    <property type="entry name" value="KS3_2"/>
    <property type="match status" value="1"/>
</dbReference>
<accession>Q8L3X9</accession>
<accession>Q9SJB7</accession>
<evidence type="ECO:0000255" key="1"/>
<evidence type="ECO:0000255" key="2">
    <source>
        <dbReference type="PROSITE-ProRule" id="PRU01348"/>
    </source>
</evidence>
<evidence type="ECO:0000269" key="3">
    <source>
    </source>
</evidence>
<evidence type="ECO:0000269" key="4">
    <source>
    </source>
</evidence>
<evidence type="ECO:0000269" key="5">
    <source>
    </source>
</evidence>
<evidence type="ECO:0000269" key="6">
    <source>
    </source>
</evidence>
<evidence type="ECO:0000303" key="7">
    <source>
    </source>
</evidence>
<evidence type="ECO:0000303" key="8">
    <source>
    </source>
</evidence>
<evidence type="ECO:0000303" key="9">
    <source>
    </source>
</evidence>
<evidence type="ECO:0000305" key="10"/>
<evidence type="ECO:0000305" key="11">
    <source>
    </source>
</evidence>
<evidence type="ECO:0000305" key="12">
    <source>
    </source>
</evidence>
<evidence type="ECO:0000312" key="13">
    <source>
        <dbReference type="Araport" id="AT2G04540"/>
    </source>
</evidence>
<evidence type="ECO:0000312" key="14">
    <source>
        <dbReference type="EMBL" id="AAD25826.1"/>
    </source>
</evidence>
<evidence type="ECO:0007829" key="15">
    <source>
        <dbReference type="PDB" id="2IX4"/>
    </source>
</evidence>
<sequence>MATSNLRRHLSASRLRLNRFISTSSSYHSHRRVVVTGLGMVTPLGRGVETTWRRLIDGECGIRGLTLDDLKMKSFDEETKLYTFDQLSSKVAAFVPYGSNPGEFDEALWLNSKAVANFIGYAVCAADEALRDAEWLPTEEEEKERTGVSIGGGIGSICDIVEAAQLICEKRLRRLSPFFIPKILVNMASGHVSMKYGFQGPNHAAVTACATGAHSIGDATRMIQFGDADVMVAGGTESSIDALSVAGFSRSRALSTKFNSSPQEASRPFDCDRDGFVIGEGSGVIVLEEYEHAKRRGAKIYAELCGYGMSGDAHHITQPPEDGKGAVLAMTRALRQSGLCPNQIDYVNAHATSTPIGDAVEARAIKTVFSEHATSGTLAFSSTKGATGHLLGAAGAVEAIFSILAIHHGVAPMTLNVKNPDPIFDKRFMPLTTSKKMLVRTAMSNSFGFGGTNASLLFASI</sequence>